<accession>P82463</accession>
<evidence type="ECO:0000250" key="1">
    <source>
        <dbReference type="UniProtKB" id="P60301"/>
    </source>
</evidence>
<evidence type="ECO:0000269" key="2">
    <source>
    </source>
</evidence>
<evidence type="ECO:0000303" key="3">
    <source>
    </source>
</evidence>
<evidence type="ECO:0000305" key="4"/>
<evidence type="ECO:0000305" key="5">
    <source>
    </source>
</evidence>
<sequence length="65" mass="7298">LTCVKEKSIFGVTTEDCPDGQNLCFKRWHMIVPGRYKKTRGCAATCPIAENRDVIECCSTDKCNL</sequence>
<organism>
    <name type="scientific">Naja kaouthia</name>
    <name type="common">Monocled cobra</name>
    <name type="synonym">Naja siamensis</name>
    <dbReference type="NCBI Taxonomy" id="8649"/>
    <lineage>
        <taxon>Eukaryota</taxon>
        <taxon>Metazoa</taxon>
        <taxon>Chordata</taxon>
        <taxon>Craniata</taxon>
        <taxon>Vertebrata</taxon>
        <taxon>Euteleostomi</taxon>
        <taxon>Lepidosauria</taxon>
        <taxon>Squamata</taxon>
        <taxon>Bifurcata</taxon>
        <taxon>Unidentata</taxon>
        <taxon>Episquamata</taxon>
        <taxon>Toxicofera</taxon>
        <taxon>Serpentes</taxon>
        <taxon>Colubroidea</taxon>
        <taxon>Elapidae</taxon>
        <taxon>Elapinae</taxon>
        <taxon>Naja</taxon>
    </lineage>
</organism>
<proteinExistence type="evidence at protein level"/>
<protein>
    <recommendedName>
        <fullName evidence="3">Muscarinic toxin-like protein 2</fullName>
        <shortName evidence="3">MTLP-2</shortName>
    </recommendedName>
</protein>
<keyword id="KW-0903">Direct protein sequencing</keyword>
<keyword id="KW-1015">Disulfide bond</keyword>
<keyword id="KW-0528">Neurotoxin</keyword>
<keyword id="KW-0629">Postsynaptic neurotoxin</keyword>
<keyword id="KW-0964">Secreted</keyword>
<keyword id="KW-0800">Toxin</keyword>
<reference key="1">
    <citation type="journal article" date="2000" name="Eur. J. Biochem.">
        <title>Muscarinic toxin-like proteins from cobra venom.</title>
        <authorList>
            <person name="Kukhtina V.V."/>
            <person name="Weise C."/>
            <person name="Muranova T.A."/>
            <person name="Starkov V.G."/>
            <person name="Franke P."/>
            <person name="Hucho F."/>
            <person name="Wnendt S."/>
            <person name="Gillen C."/>
            <person name="Tsetlin V.I."/>
            <person name="Utkin Y.N."/>
        </authorList>
    </citation>
    <scope>PROTEIN SEQUENCE</scope>
    <scope>MASS SPECTROMETRY</scope>
    <scope>SUBCELLULAR LOCATION</scope>
    <source>
        <tissue>Venom</tissue>
    </source>
</reference>
<dbReference type="SMR" id="P82463"/>
<dbReference type="GO" id="GO:0005576">
    <property type="term" value="C:extracellular region"/>
    <property type="evidence" value="ECO:0007669"/>
    <property type="project" value="UniProtKB-SubCell"/>
</dbReference>
<dbReference type="GO" id="GO:0090729">
    <property type="term" value="F:toxin activity"/>
    <property type="evidence" value="ECO:0007669"/>
    <property type="project" value="UniProtKB-KW"/>
</dbReference>
<dbReference type="CDD" id="cd00206">
    <property type="entry name" value="TFP_snake_toxin"/>
    <property type="match status" value="1"/>
</dbReference>
<dbReference type="FunFam" id="2.10.60.10:FF:000024">
    <property type="entry name" value="Cytotoxin 1"/>
    <property type="match status" value="1"/>
</dbReference>
<dbReference type="Gene3D" id="2.10.60.10">
    <property type="entry name" value="CD59"/>
    <property type="match status" value="1"/>
</dbReference>
<dbReference type="InterPro" id="IPR003572">
    <property type="entry name" value="Cytotoxin_Cobra"/>
</dbReference>
<dbReference type="InterPro" id="IPR003571">
    <property type="entry name" value="Snake_3FTx"/>
</dbReference>
<dbReference type="InterPro" id="IPR045860">
    <property type="entry name" value="Snake_toxin-like_sf"/>
</dbReference>
<dbReference type="InterPro" id="IPR018354">
    <property type="entry name" value="Snake_toxin_con_site"/>
</dbReference>
<dbReference type="InterPro" id="IPR054131">
    <property type="entry name" value="Toxin_cobra-type"/>
</dbReference>
<dbReference type="Pfam" id="PF21947">
    <property type="entry name" value="Toxin_cobra-type"/>
    <property type="match status" value="1"/>
</dbReference>
<dbReference type="PRINTS" id="PR00282">
    <property type="entry name" value="CYTOTOXIN"/>
</dbReference>
<dbReference type="SUPFAM" id="SSF57302">
    <property type="entry name" value="Snake toxin-like"/>
    <property type="match status" value="1"/>
</dbReference>
<dbReference type="PROSITE" id="PS00272">
    <property type="entry name" value="SNAKE_TOXIN"/>
    <property type="match status" value="1"/>
</dbReference>
<comment type="subunit">
    <text evidence="5">Monomer.</text>
</comment>
<comment type="subcellular location">
    <subcellularLocation>
        <location evidence="2">Secreted</location>
    </subcellularLocation>
</comment>
<comment type="tissue specificity">
    <text evidence="4">Expressed by the venom gland.</text>
</comment>
<comment type="mass spectrometry" mass="7293.0" method="MALDI" evidence="2"/>
<comment type="miscellaneous">
    <text evidence="2">Negative results: has no effect on ligand binding to any of the mAChR subtypes at concentrations up to 1 uM.</text>
</comment>
<comment type="miscellaneous">
    <text evidence="4">Is classified as a P-type cytotoxin, since a proline residue stands at position 33 (Pro-31 in standard classification).</text>
</comment>
<comment type="similarity">
    <text evidence="4">Belongs to the three-finger toxin family. Short-chain subfamily. Type C muscarinic toxin sub-subfamily.</text>
</comment>
<feature type="chain" id="PRO_0000093651" description="Muscarinic toxin-like protein 2" evidence="2">
    <location>
        <begin position="1"/>
        <end position="65"/>
    </location>
</feature>
<feature type="disulfide bond" evidence="1">
    <location>
        <begin position="3"/>
        <end position="24"/>
    </location>
</feature>
<feature type="disulfide bond" evidence="1">
    <location>
        <begin position="17"/>
        <end position="42"/>
    </location>
</feature>
<feature type="disulfide bond" evidence="1">
    <location>
        <begin position="46"/>
        <end position="57"/>
    </location>
</feature>
<feature type="disulfide bond" evidence="1">
    <location>
        <begin position="58"/>
        <end position="63"/>
    </location>
</feature>
<name>3SUC2_NAJKA</name>